<proteinExistence type="evidence at protein level"/>
<reference key="1">
    <citation type="journal article" date="2000" name="Science">
        <title>The genome sequence of Drosophila melanogaster.</title>
        <authorList>
            <person name="Adams M.D."/>
            <person name="Celniker S.E."/>
            <person name="Holt R.A."/>
            <person name="Evans C.A."/>
            <person name="Gocayne J.D."/>
            <person name="Amanatides P.G."/>
            <person name="Scherer S.E."/>
            <person name="Li P.W."/>
            <person name="Hoskins R.A."/>
            <person name="Galle R.F."/>
            <person name="George R.A."/>
            <person name="Lewis S.E."/>
            <person name="Richards S."/>
            <person name="Ashburner M."/>
            <person name="Henderson S.N."/>
            <person name="Sutton G.G."/>
            <person name="Wortman J.R."/>
            <person name="Yandell M.D."/>
            <person name="Zhang Q."/>
            <person name="Chen L.X."/>
            <person name="Brandon R.C."/>
            <person name="Rogers Y.-H.C."/>
            <person name="Blazej R.G."/>
            <person name="Champe M."/>
            <person name="Pfeiffer B.D."/>
            <person name="Wan K.H."/>
            <person name="Doyle C."/>
            <person name="Baxter E.G."/>
            <person name="Helt G."/>
            <person name="Nelson C.R."/>
            <person name="Miklos G.L.G."/>
            <person name="Abril J.F."/>
            <person name="Agbayani A."/>
            <person name="An H.-J."/>
            <person name="Andrews-Pfannkoch C."/>
            <person name="Baldwin D."/>
            <person name="Ballew R.M."/>
            <person name="Basu A."/>
            <person name="Baxendale J."/>
            <person name="Bayraktaroglu L."/>
            <person name="Beasley E.M."/>
            <person name="Beeson K.Y."/>
            <person name="Benos P.V."/>
            <person name="Berman B.P."/>
            <person name="Bhandari D."/>
            <person name="Bolshakov S."/>
            <person name="Borkova D."/>
            <person name="Botchan M.R."/>
            <person name="Bouck J."/>
            <person name="Brokstein P."/>
            <person name="Brottier P."/>
            <person name="Burtis K.C."/>
            <person name="Busam D.A."/>
            <person name="Butler H."/>
            <person name="Cadieu E."/>
            <person name="Center A."/>
            <person name="Chandra I."/>
            <person name="Cherry J.M."/>
            <person name="Cawley S."/>
            <person name="Dahlke C."/>
            <person name="Davenport L.B."/>
            <person name="Davies P."/>
            <person name="de Pablos B."/>
            <person name="Delcher A."/>
            <person name="Deng Z."/>
            <person name="Mays A.D."/>
            <person name="Dew I."/>
            <person name="Dietz S.M."/>
            <person name="Dodson K."/>
            <person name="Doup L.E."/>
            <person name="Downes M."/>
            <person name="Dugan-Rocha S."/>
            <person name="Dunkov B.C."/>
            <person name="Dunn P."/>
            <person name="Durbin K.J."/>
            <person name="Evangelista C.C."/>
            <person name="Ferraz C."/>
            <person name="Ferriera S."/>
            <person name="Fleischmann W."/>
            <person name="Fosler C."/>
            <person name="Gabrielian A.E."/>
            <person name="Garg N.S."/>
            <person name="Gelbart W.M."/>
            <person name="Glasser K."/>
            <person name="Glodek A."/>
            <person name="Gong F."/>
            <person name="Gorrell J.H."/>
            <person name="Gu Z."/>
            <person name="Guan P."/>
            <person name="Harris M."/>
            <person name="Harris N.L."/>
            <person name="Harvey D.A."/>
            <person name="Heiman T.J."/>
            <person name="Hernandez J.R."/>
            <person name="Houck J."/>
            <person name="Hostin D."/>
            <person name="Houston K.A."/>
            <person name="Howland T.J."/>
            <person name="Wei M.-H."/>
            <person name="Ibegwam C."/>
            <person name="Jalali M."/>
            <person name="Kalush F."/>
            <person name="Karpen G.H."/>
            <person name="Ke Z."/>
            <person name="Kennison J.A."/>
            <person name="Ketchum K.A."/>
            <person name="Kimmel B.E."/>
            <person name="Kodira C.D."/>
            <person name="Kraft C.L."/>
            <person name="Kravitz S."/>
            <person name="Kulp D."/>
            <person name="Lai Z."/>
            <person name="Lasko P."/>
            <person name="Lei Y."/>
            <person name="Levitsky A.A."/>
            <person name="Li J.H."/>
            <person name="Li Z."/>
            <person name="Liang Y."/>
            <person name="Lin X."/>
            <person name="Liu X."/>
            <person name="Mattei B."/>
            <person name="McIntosh T.C."/>
            <person name="McLeod M.P."/>
            <person name="McPherson D."/>
            <person name="Merkulov G."/>
            <person name="Milshina N.V."/>
            <person name="Mobarry C."/>
            <person name="Morris J."/>
            <person name="Moshrefi A."/>
            <person name="Mount S.M."/>
            <person name="Moy M."/>
            <person name="Murphy B."/>
            <person name="Murphy L."/>
            <person name="Muzny D.M."/>
            <person name="Nelson D.L."/>
            <person name="Nelson D.R."/>
            <person name="Nelson K.A."/>
            <person name="Nixon K."/>
            <person name="Nusskern D.R."/>
            <person name="Pacleb J.M."/>
            <person name="Palazzolo M."/>
            <person name="Pittman G.S."/>
            <person name="Pan S."/>
            <person name="Pollard J."/>
            <person name="Puri V."/>
            <person name="Reese M.G."/>
            <person name="Reinert K."/>
            <person name="Remington K."/>
            <person name="Saunders R.D.C."/>
            <person name="Scheeler F."/>
            <person name="Shen H."/>
            <person name="Shue B.C."/>
            <person name="Siden-Kiamos I."/>
            <person name="Simpson M."/>
            <person name="Skupski M.P."/>
            <person name="Smith T.J."/>
            <person name="Spier E."/>
            <person name="Spradling A.C."/>
            <person name="Stapleton M."/>
            <person name="Strong R."/>
            <person name="Sun E."/>
            <person name="Svirskas R."/>
            <person name="Tector C."/>
            <person name="Turner R."/>
            <person name="Venter E."/>
            <person name="Wang A.H."/>
            <person name="Wang X."/>
            <person name="Wang Z.-Y."/>
            <person name="Wassarman D.A."/>
            <person name="Weinstock G.M."/>
            <person name="Weissenbach J."/>
            <person name="Williams S.M."/>
            <person name="Woodage T."/>
            <person name="Worley K.C."/>
            <person name="Wu D."/>
            <person name="Yang S."/>
            <person name="Yao Q.A."/>
            <person name="Ye J."/>
            <person name="Yeh R.-F."/>
            <person name="Zaveri J.S."/>
            <person name="Zhan M."/>
            <person name="Zhang G."/>
            <person name="Zhao Q."/>
            <person name="Zheng L."/>
            <person name="Zheng X.H."/>
            <person name="Zhong F.N."/>
            <person name="Zhong W."/>
            <person name="Zhou X."/>
            <person name="Zhu S.C."/>
            <person name="Zhu X."/>
            <person name="Smith H.O."/>
            <person name="Gibbs R.A."/>
            <person name="Myers E.W."/>
            <person name="Rubin G.M."/>
            <person name="Venter J.C."/>
        </authorList>
    </citation>
    <scope>NUCLEOTIDE SEQUENCE [LARGE SCALE GENOMIC DNA]</scope>
    <source>
        <strain>Berkeley</strain>
    </source>
</reference>
<reference key="2">
    <citation type="journal article" date="2002" name="Genome Biol.">
        <title>Annotation of the Drosophila melanogaster euchromatic genome: a systematic review.</title>
        <authorList>
            <person name="Misra S."/>
            <person name="Crosby M.A."/>
            <person name="Mungall C.J."/>
            <person name="Matthews B.B."/>
            <person name="Campbell K.S."/>
            <person name="Hradecky P."/>
            <person name="Huang Y."/>
            <person name="Kaminker J.S."/>
            <person name="Millburn G.H."/>
            <person name="Prochnik S.E."/>
            <person name="Smith C.D."/>
            <person name="Tupy J.L."/>
            <person name="Whitfield E.J."/>
            <person name="Bayraktaroglu L."/>
            <person name="Berman B.P."/>
            <person name="Bettencourt B.R."/>
            <person name="Celniker S.E."/>
            <person name="de Grey A.D.N.J."/>
            <person name="Drysdale R.A."/>
            <person name="Harris N.L."/>
            <person name="Richter J."/>
            <person name="Russo S."/>
            <person name="Schroeder A.J."/>
            <person name="Shu S.Q."/>
            <person name="Stapleton M."/>
            <person name="Yamada C."/>
            <person name="Ashburner M."/>
            <person name="Gelbart W.M."/>
            <person name="Rubin G.M."/>
            <person name="Lewis S.E."/>
        </authorList>
    </citation>
    <scope>GENOME REANNOTATION</scope>
    <source>
        <strain>Berkeley</strain>
    </source>
</reference>
<reference key="3">
    <citation type="journal article" date="2002" name="Genome Biol.">
        <title>A Drosophila full-length cDNA resource.</title>
        <authorList>
            <person name="Stapleton M."/>
            <person name="Carlson J.W."/>
            <person name="Brokstein P."/>
            <person name="Yu C."/>
            <person name="Champe M."/>
            <person name="George R.A."/>
            <person name="Guarin H."/>
            <person name="Kronmiller B."/>
            <person name="Pacleb J.M."/>
            <person name="Park S."/>
            <person name="Wan K.H."/>
            <person name="Rubin G.M."/>
            <person name="Celniker S.E."/>
        </authorList>
    </citation>
    <scope>NUCLEOTIDE SEQUENCE [LARGE SCALE MRNA]</scope>
    <source>
        <strain>Berkeley</strain>
        <tissue>Embryo</tissue>
    </source>
</reference>
<reference key="4">
    <citation type="journal article" date="2020" name="PLoS Genet.">
        <title>Haspin kinase modulates nuclear architecture and Polycomb-dependent gene silencing.</title>
        <authorList>
            <person name="Fresan U."/>
            <person name="Rodriguez-Sanchez M.A."/>
            <person name="Reina O."/>
            <person name="Corces V.G."/>
            <person name="Espinas M.L."/>
        </authorList>
    </citation>
    <scope>FUNCTION</scope>
    <scope>INTERACTION WITH PDS5 AND VTD</scope>
    <scope>SUBCELLULAR LOCATION</scope>
    <scope>DISRUPTION PHENOTYPE</scope>
    <scope>MUTAGENESIS OF LYS-282</scope>
</reference>
<gene>
    <name evidence="4 6" type="primary">Haspin</name>
    <name evidence="6" type="ORF">CG40080</name>
</gene>
<dbReference type="EC" id="2.7.11.1" evidence="5"/>
<dbReference type="EMBL" id="AE013599">
    <property type="protein sequence ID" value="EAA46104.2"/>
    <property type="molecule type" value="Genomic_DNA"/>
</dbReference>
<dbReference type="EMBL" id="AY118897">
    <property type="protein sequence ID" value="AAM50757.1"/>
    <property type="molecule type" value="mRNA"/>
</dbReference>
<dbReference type="RefSeq" id="NP_001015349.2">
    <property type="nucleotide sequence ID" value="NM_001015349.4"/>
</dbReference>
<dbReference type="SMR" id="P83103"/>
<dbReference type="BioGRID" id="78189">
    <property type="interactions" value="2"/>
</dbReference>
<dbReference type="FunCoup" id="P83103">
    <property type="interactions" value="140"/>
</dbReference>
<dbReference type="STRING" id="7227.FBpp0112507"/>
<dbReference type="PaxDb" id="7227-FBpp0112507"/>
<dbReference type="DNASU" id="3355064"/>
<dbReference type="EnsemblMetazoa" id="FBtr0113784">
    <property type="protein sequence ID" value="FBpp0112507"/>
    <property type="gene ID" value="FBgn0046706"/>
</dbReference>
<dbReference type="GeneID" id="3355064"/>
<dbReference type="KEGG" id="dme:Dmel_CG40080"/>
<dbReference type="UCSC" id="CG40080-RA">
    <property type="organism name" value="d. melanogaster"/>
</dbReference>
<dbReference type="AGR" id="FB:FBgn0046706"/>
<dbReference type="CTD" id="83903"/>
<dbReference type="FlyBase" id="FBgn0046706">
    <property type="gene designation" value="Haspin"/>
</dbReference>
<dbReference type="VEuPathDB" id="VectorBase:FBgn0046706"/>
<dbReference type="eggNOG" id="KOG2464">
    <property type="taxonomic scope" value="Eukaryota"/>
</dbReference>
<dbReference type="GeneTree" id="ENSGT00940000167518"/>
<dbReference type="HOGENOM" id="CLU_019002_2_0_1"/>
<dbReference type="InParanoid" id="P83103"/>
<dbReference type="OMA" id="CHYNDLS"/>
<dbReference type="OrthoDB" id="21018at2759"/>
<dbReference type="PhylomeDB" id="P83103"/>
<dbReference type="BioGRID-ORCS" id="3355064">
    <property type="hits" value="1 hit in 3 CRISPR screens"/>
</dbReference>
<dbReference type="GenomeRNAi" id="3355064"/>
<dbReference type="PRO" id="PR:P83103"/>
<dbReference type="Proteomes" id="UP000000803">
    <property type="component" value="Chromosome 2R"/>
</dbReference>
<dbReference type="Bgee" id="FBgn0046706">
    <property type="expression patterns" value="Expressed in spermatocyte in testis and 259 other cell types or tissues"/>
</dbReference>
<dbReference type="GO" id="GO:0000785">
    <property type="term" value="C:chromatin"/>
    <property type="evidence" value="ECO:0000315"/>
    <property type="project" value="UniProtKB"/>
</dbReference>
<dbReference type="GO" id="GO:0005737">
    <property type="term" value="C:cytoplasm"/>
    <property type="evidence" value="ECO:0000318"/>
    <property type="project" value="GO_Central"/>
</dbReference>
<dbReference type="GO" id="GO:0005652">
    <property type="term" value="C:nuclear lamina"/>
    <property type="evidence" value="ECO:0000314"/>
    <property type="project" value="UniProtKB"/>
</dbReference>
<dbReference type="GO" id="GO:0005634">
    <property type="term" value="C:nucleus"/>
    <property type="evidence" value="ECO:0000250"/>
    <property type="project" value="UniProtKB"/>
</dbReference>
<dbReference type="GO" id="GO:0005819">
    <property type="term" value="C:spindle"/>
    <property type="evidence" value="ECO:0007669"/>
    <property type="project" value="UniProtKB-SubCell"/>
</dbReference>
<dbReference type="GO" id="GO:0005524">
    <property type="term" value="F:ATP binding"/>
    <property type="evidence" value="ECO:0000250"/>
    <property type="project" value="UniProtKB"/>
</dbReference>
<dbReference type="GO" id="GO:0072354">
    <property type="term" value="F:histone H3T3 kinase activity"/>
    <property type="evidence" value="ECO:0000315"/>
    <property type="project" value="UniProtKB"/>
</dbReference>
<dbReference type="GO" id="GO:0106310">
    <property type="term" value="F:protein serine kinase activity"/>
    <property type="evidence" value="ECO:0007669"/>
    <property type="project" value="RHEA"/>
</dbReference>
<dbReference type="GO" id="GO:0035556">
    <property type="term" value="P:intracellular signal transduction"/>
    <property type="evidence" value="ECO:0000250"/>
    <property type="project" value="UniProtKB"/>
</dbReference>
<dbReference type="GO" id="GO:0000278">
    <property type="term" value="P:mitotic cell cycle"/>
    <property type="evidence" value="ECO:0000318"/>
    <property type="project" value="GO_Central"/>
</dbReference>
<dbReference type="GO" id="GO:2000720">
    <property type="term" value="P:positive regulation of maintenance of mitotic sister chromatid cohesion, centromeric"/>
    <property type="evidence" value="ECO:0000315"/>
    <property type="project" value="UniProtKB"/>
</dbReference>
<dbReference type="GO" id="GO:0034093">
    <property type="term" value="P:positive regulation of maintenance of sister chromatid cohesion"/>
    <property type="evidence" value="ECO:0000315"/>
    <property type="project" value="UniProtKB"/>
</dbReference>
<dbReference type="GO" id="GO:0120187">
    <property type="term" value="P:positive regulation of protein localization to chromatin"/>
    <property type="evidence" value="ECO:0000315"/>
    <property type="project" value="UniProtKB"/>
</dbReference>
<dbReference type="GO" id="GO:0043687">
    <property type="term" value="P:post-translational protein modification"/>
    <property type="evidence" value="ECO:0000315"/>
    <property type="project" value="UniProtKB"/>
</dbReference>
<dbReference type="GO" id="GO:0006468">
    <property type="term" value="P:protein phosphorylation"/>
    <property type="evidence" value="ECO:0000250"/>
    <property type="project" value="UniProtKB"/>
</dbReference>
<dbReference type="FunFam" id="1.10.510.10:FF:000401">
    <property type="entry name" value="serine/threonine-protein kinase haspin"/>
    <property type="match status" value="1"/>
</dbReference>
<dbReference type="FunFam" id="3.30.200.20:FF:000409">
    <property type="entry name" value="serine/threonine-protein kinase haspin"/>
    <property type="match status" value="1"/>
</dbReference>
<dbReference type="Gene3D" id="3.30.200.20">
    <property type="entry name" value="Phosphorylase Kinase, domain 1"/>
    <property type="match status" value="1"/>
</dbReference>
<dbReference type="Gene3D" id="1.10.510.10">
    <property type="entry name" value="Transferase(Phosphotransferase) domain 1"/>
    <property type="match status" value="1"/>
</dbReference>
<dbReference type="InterPro" id="IPR024604">
    <property type="entry name" value="GSG2_C"/>
</dbReference>
<dbReference type="InterPro" id="IPR011009">
    <property type="entry name" value="Kinase-like_dom_sf"/>
</dbReference>
<dbReference type="InterPro" id="IPR000719">
    <property type="entry name" value="Prot_kinase_dom"/>
</dbReference>
<dbReference type="InterPro" id="IPR017441">
    <property type="entry name" value="Protein_kinase_ATP_BS"/>
</dbReference>
<dbReference type="PANTHER" id="PTHR24419">
    <property type="entry name" value="INTERLEUKIN-1 RECEPTOR-ASSOCIATED KINASE"/>
    <property type="match status" value="1"/>
</dbReference>
<dbReference type="PANTHER" id="PTHR24419:SF18">
    <property type="entry name" value="SERINE_THREONINE-PROTEIN KINASE HASPIN"/>
    <property type="match status" value="1"/>
</dbReference>
<dbReference type="Pfam" id="PF12330">
    <property type="entry name" value="Haspin_kinase"/>
    <property type="match status" value="1"/>
</dbReference>
<dbReference type="SMART" id="SM01331">
    <property type="entry name" value="DUF3635"/>
    <property type="match status" value="1"/>
</dbReference>
<dbReference type="SUPFAM" id="SSF56112">
    <property type="entry name" value="Protein kinase-like (PK-like)"/>
    <property type="match status" value="1"/>
</dbReference>
<dbReference type="PROSITE" id="PS00107">
    <property type="entry name" value="PROTEIN_KINASE_ATP"/>
    <property type="match status" value="1"/>
</dbReference>
<dbReference type="PROSITE" id="PS50011">
    <property type="entry name" value="PROTEIN_KINASE_DOM"/>
    <property type="match status" value="1"/>
</dbReference>
<comment type="function">
    <text evidence="1 3">Serine/threonine-protein kinase that phosphorylates histone H3 at 'Thr-4' (H3T3ph) during mitosis and interphase (PubMed:32750047). Function is essential for chromosome organization during mitosis and genome organization in interphase cells, thus playing a functional role in gene regulation (PubMed:32750047). During mitosis, may act through H3T3ph to both position and modulate activation of AURKB and other components of the chromosomal passenger complex (CPC) at centromeres to ensure proper chromatid cohesion, metaphase alignment and normal progression through the cell cycle (By similarity). During interphase, associates with the cohesion complex and mediates pds5 binding to chromatin to ensure correct sister chromatid cohesion, chromatin organization, and also functions with Pds5-cohesin to modify Polycomb-dependent homeotic transformations (PubMed:32750047). Function during interphase is required for insulator activity, nuclear compaction, heterochromatin-induced position-effect variegation and PcG-mediated pairing-sensitive silencing (PubMed:32750047).</text>
</comment>
<comment type="catalytic activity">
    <reaction evidence="5">
        <text>L-seryl-[protein] + ATP = O-phospho-L-seryl-[protein] + ADP + H(+)</text>
        <dbReference type="Rhea" id="RHEA:17989"/>
        <dbReference type="Rhea" id="RHEA-COMP:9863"/>
        <dbReference type="Rhea" id="RHEA-COMP:11604"/>
        <dbReference type="ChEBI" id="CHEBI:15378"/>
        <dbReference type="ChEBI" id="CHEBI:29999"/>
        <dbReference type="ChEBI" id="CHEBI:30616"/>
        <dbReference type="ChEBI" id="CHEBI:83421"/>
        <dbReference type="ChEBI" id="CHEBI:456216"/>
        <dbReference type="EC" id="2.7.11.1"/>
    </reaction>
</comment>
<comment type="catalytic activity">
    <reaction evidence="5">
        <text>L-threonyl-[protein] + ATP = O-phospho-L-threonyl-[protein] + ADP + H(+)</text>
        <dbReference type="Rhea" id="RHEA:46608"/>
        <dbReference type="Rhea" id="RHEA-COMP:11060"/>
        <dbReference type="Rhea" id="RHEA-COMP:11605"/>
        <dbReference type="ChEBI" id="CHEBI:15378"/>
        <dbReference type="ChEBI" id="CHEBI:30013"/>
        <dbReference type="ChEBI" id="CHEBI:30616"/>
        <dbReference type="ChEBI" id="CHEBI:61977"/>
        <dbReference type="ChEBI" id="CHEBI:456216"/>
        <dbReference type="EC" id="2.7.11.1"/>
    </reaction>
</comment>
<comment type="cofactor">
    <cofactor evidence="1">
        <name>Mg(2+)</name>
        <dbReference type="ChEBI" id="CHEBI:18420"/>
    </cofactor>
</comment>
<comment type="subunit">
    <text evidence="3">Interacts with pds5 and vtd.</text>
</comment>
<comment type="subcellular location">
    <subcellularLocation>
        <location evidence="3">Nucleus lamina</location>
    </subcellularLocation>
    <subcellularLocation>
        <location evidence="3">Chromosome</location>
    </subcellularLocation>
    <subcellularLocation>
        <location evidence="1">Cytoplasm</location>
        <location evidence="1">Cytoskeleton</location>
        <location evidence="1">Spindle</location>
    </subcellularLocation>
</comment>
<comment type="disruption phenotype">
    <text evidence="3">Viable, however adults display a decrease in survival which is stronger in females than males, and both sexes display a decrease in fertility (PubMed:32750047). Loss of phosphorylation of histone H3 leading to reduced centromeric cohesion (PubMed:32750047). RNAi-mediated knockdown reduces the size of salivary gland nuclei (PubMed:32750047). Also results in a strong decrease in chromosome-bound pds5 in larval salivary glands and a significant decrease in chromatin-bound vtd in mitotic and interphase embryo cells (PubMed:32750047).</text>
</comment>
<comment type="similarity">
    <text evidence="2">Belongs to the protein kinase superfamily. Ser/Thr protein kinase family. Haspin subfamily.</text>
</comment>
<accession>P83103</accession>
<accession>Q7PLN2</accession>
<feature type="chain" id="PRO_0000085991" description="Serine/threonine-protein kinase haspin homolog">
    <location>
        <begin position="1"/>
        <end position="566"/>
    </location>
</feature>
<feature type="domain" description="Protein kinase" evidence="2">
    <location>
        <begin position="248"/>
        <end position="566"/>
    </location>
</feature>
<feature type="active site" description="Proton acceptor" evidence="2">
    <location>
        <position position="418"/>
    </location>
</feature>
<feature type="binding site" evidence="2">
    <location>
        <begin position="254"/>
        <end position="262"/>
    </location>
    <ligand>
        <name>ATP</name>
        <dbReference type="ChEBI" id="CHEBI:30616"/>
    </ligand>
</feature>
<feature type="binding site" evidence="2">
    <location>
        <position position="282"/>
    </location>
    <ligand>
        <name>ATP</name>
        <dbReference type="ChEBI" id="CHEBI:30616"/>
    </ligand>
</feature>
<feature type="binding site" evidence="1">
    <location>
        <begin position="377"/>
        <end position="382"/>
    </location>
    <ligand>
        <name>ATP</name>
        <dbReference type="ChEBI" id="CHEBI:30616"/>
    </ligand>
</feature>
<feature type="binding site" evidence="1">
    <location>
        <begin position="418"/>
        <end position="423"/>
    </location>
    <ligand>
        <name>ATP</name>
        <dbReference type="ChEBI" id="CHEBI:30616"/>
    </ligand>
</feature>
<feature type="binding site" evidence="1">
    <location>
        <begin position="456"/>
        <end position="458"/>
    </location>
    <ligand>
        <name>ATP</name>
        <dbReference type="ChEBI" id="CHEBI:30616"/>
    </ligand>
</feature>
<feature type="mutagenesis site" description="Loss of catalytic activity. Reduced nuclear size in larval salivary glands." evidence="3">
    <original>K</original>
    <variation>M</variation>
    <location>
        <position position="282"/>
    </location>
</feature>
<name>HASP_DROME</name>
<protein>
    <recommendedName>
        <fullName evidence="4">Serine/threonine-protein kinase haspin homolog</fullName>
        <ecNumber evidence="5">2.7.11.1</ecNumber>
    </recommendedName>
</protein>
<keyword id="KW-0067">ATP-binding</keyword>
<keyword id="KW-0158">Chromosome</keyword>
<keyword id="KW-0963">Cytoplasm</keyword>
<keyword id="KW-0206">Cytoskeleton</keyword>
<keyword id="KW-0418">Kinase</keyword>
<keyword id="KW-0547">Nucleotide-binding</keyword>
<keyword id="KW-0539">Nucleus</keyword>
<keyword id="KW-0597">Phosphoprotein</keyword>
<keyword id="KW-1185">Reference proteome</keyword>
<keyword id="KW-0723">Serine/threonine-protein kinase</keyword>
<keyword id="KW-0808">Transferase</keyword>
<sequence length="566" mass="65323">MLSISKTKMDFLEEGRWKDPFDELLDSRTKLSKMNIVKQNVRVTYNIDSSVENSSYIEIKEPNHKNEPLTLEDCSIKVYCPSDSISTPCDKRLGGTTGLFETDLSPITRLKLEGVEDSRDKCADTNEADLYVNVEILFQNINSSPKKCSNFGKKRLSNLNKMVTAVHPSISLNPGKWRKSLNNFIRSKITETNFTKKVERRSSICQDRKSLVLKGEHKFENKYEEDVLKYCHQCTPLPFNTAYEQHKLLNTKKIGEGAYGEVFRCSRNQEVLKDHISDIVLKIIPLEGSTVINGEKQKTFSQILPEIIITKKMCSLRTSKTNSTNGFVSIQKVSLVKGRYPPHFIKLWEKYDNEKGSENDHPELFGDNQLFAVLELKFAGSDMANFKFLNSEQSYYALQQIILALAVGEEEYQFEHRDLHLGNILIEYTNKKHIVCTFKSSNLTLLSKGVNVTIIDYTLSRVTINDCCYFNDLSRDEELFQATGDYQYDVYRMMRNELKNNWSSFSPKTNIIWLSYVIVKVLDSVKYKSINTKVHRMYIDKIKELKNIIMTFESASHCANYLFNLN</sequence>
<organism>
    <name type="scientific">Drosophila melanogaster</name>
    <name type="common">Fruit fly</name>
    <dbReference type="NCBI Taxonomy" id="7227"/>
    <lineage>
        <taxon>Eukaryota</taxon>
        <taxon>Metazoa</taxon>
        <taxon>Ecdysozoa</taxon>
        <taxon>Arthropoda</taxon>
        <taxon>Hexapoda</taxon>
        <taxon>Insecta</taxon>
        <taxon>Pterygota</taxon>
        <taxon>Neoptera</taxon>
        <taxon>Endopterygota</taxon>
        <taxon>Diptera</taxon>
        <taxon>Brachycera</taxon>
        <taxon>Muscomorpha</taxon>
        <taxon>Ephydroidea</taxon>
        <taxon>Drosophilidae</taxon>
        <taxon>Drosophila</taxon>
        <taxon>Sophophora</taxon>
    </lineage>
</organism>
<evidence type="ECO:0000250" key="1">
    <source>
        <dbReference type="UniProtKB" id="Q8TF76"/>
    </source>
</evidence>
<evidence type="ECO:0000255" key="2">
    <source>
        <dbReference type="PROSITE-ProRule" id="PRU00159"/>
    </source>
</evidence>
<evidence type="ECO:0000269" key="3">
    <source>
    </source>
</evidence>
<evidence type="ECO:0000303" key="4">
    <source>
    </source>
</evidence>
<evidence type="ECO:0000305" key="5">
    <source>
    </source>
</evidence>
<evidence type="ECO:0000312" key="6">
    <source>
        <dbReference type="FlyBase" id="FBgn0046706"/>
    </source>
</evidence>